<organism>
    <name type="scientific">Streptococcus pyogenes serotype M3 (strain SSI-1)</name>
    <dbReference type="NCBI Taxonomy" id="193567"/>
    <lineage>
        <taxon>Bacteria</taxon>
        <taxon>Bacillati</taxon>
        <taxon>Bacillota</taxon>
        <taxon>Bacilli</taxon>
        <taxon>Lactobacillales</taxon>
        <taxon>Streptococcaceae</taxon>
        <taxon>Streptococcus</taxon>
    </lineage>
</organism>
<evidence type="ECO:0000255" key="1">
    <source>
        <dbReference type="HAMAP-Rule" id="MF_00086"/>
    </source>
</evidence>
<dbReference type="EC" id="2.5.1.6" evidence="1"/>
<dbReference type="EMBL" id="BA000034">
    <property type="protein sequence ID" value="BAC63921.1"/>
    <property type="molecule type" value="Genomic_DNA"/>
</dbReference>
<dbReference type="RefSeq" id="WP_011054632.1">
    <property type="nucleotide sequence ID" value="NC_004606.1"/>
</dbReference>
<dbReference type="SMR" id="P0DF55"/>
<dbReference type="KEGG" id="sps:SPs0826"/>
<dbReference type="HOGENOM" id="CLU_041802_1_1_9"/>
<dbReference type="UniPathway" id="UPA00315">
    <property type="reaction ID" value="UER00080"/>
</dbReference>
<dbReference type="GO" id="GO:0005737">
    <property type="term" value="C:cytoplasm"/>
    <property type="evidence" value="ECO:0007669"/>
    <property type="project" value="UniProtKB-SubCell"/>
</dbReference>
<dbReference type="GO" id="GO:0005524">
    <property type="term" value="F:ATP binding"/>
    <property type="evidence" value="ECO:0007669"/>
    <property type="project" value="UniProtKB-UniRule"/>
</dbReference>
<dbReference type="GO" id="GO:0000287">
    <property type="term" value="F:magnesium ion binding"/>
    <property type="evidence" value="ECO:0007669"/>
    <property type="project" value="UniProtKB-UniRule"/>
</dbReference>
<dbReference type="GO" id="GO:0004478">
    <property type="term" value="F:methionine adenosyltransferase activity"/>
    <property type="evidence" value="ECO:0007669"/>
    <property type="project" value="UniProtKB-UniRule"/>
</dbReference>
<dbReference type="GO" id="GO:0006730">
    <property type="term" value="P:one-carbon metabolic process"/>
    <property type="evidence" value="ECO:0007669"/>
    <property type="project" value="UniProtKB-KW"/>
</dbReference>
<dbReference type="GO" id="GO:0006556">
    <property type="term" value="P:S-adenosylmethionine biosynthetic process"/>
    <property type="evidence" value="ECO:0007669"/>
    <property type="project" value="UniProtKB-UniRule"/>
</dbReference>
<dbReference type="CDD" id="cd18079">
    <property type="entry name" value="S-AdoMet_synt"/>
    <property type="match status" value="1"/>
</dbReference>
<dbReference type="FunFam" id="3.30.300.10:FF:000003">
    <property type="entry name" value="S-adenosylmethionine synthase"/>
    <property type="match status" value="1"/>
</dbReference>
<dbReference type="Gene3D" id="3.30.300.10">
    <property type="match status" value="3"/>
</dbReference>
<dbReference type="HAMAP" id="MF_00086">
    <property type="entry name" value="S_AdoMet_synth1"/>
    <property type="match status" value="1"/>
</dbReference>
<dbReference type="InterPro" id="IPR022631">
    <property type="entry name" value="ADOMET_SYNTHASE_CS"/>
</dbReference>
<dbReference type="InterPro" id="IPR022630">
    <property type="entry name" value="S-AdoMet_synt_C"/>
</dbReference>
<dbReference type="InterPro" id="IPR022629">
    <property type="entry name" value="S-AdoMet_synt_central"/>
</dbReference>
<dbReference type="InterPro" id="IPR022628">
    <property type="entry name" value="S-AdoMet_synt_N"/>
</dbReference>
<dbReference type="InterPro" id="IPR002133">
    <property type="entry name" value="S-AdoMet_synthetase"/>
</dbReference>
<dbReference type="InterPro" id="IPR022636">
    <property type="entry name" value="S-AdoMet_synthetase_sfam"/>
</dbReference>
<dbReference type="NCBIfam" id="TIGR01034">
    <property type="entry name" value="metK"/>
    <property type="match status" value="1"/>
</dbReference>
<dbReference type="PANTHER" id="PTHR11964">
    <property type="entry name" value="S-ADENOSYLMETHIONINE SYNTHETASE"/>
    <property type="match status" value="1"/>
</dbReference>
<dbReference type="Pfam" id="PF02773">
    <property type="entry name" value="S-AdoMet_synt_C"/>
    <property type="match status" value="1"/>
</dbReference>
<dbReference type="Pfam" id="PF02772">
    <property type="entry name" value="S-AdoMet_synt_M"/>
    <property type="match status" value="1"/>
</dbReference>
<dbReference type="Pfam" id="PF00438">
    <property type="entry name" value="S-AdoMet_synt_N"/>
    <property type="match status" value="1"/>
</dbReference>
<dbReference type="PIRSF" id="PIRSF000497">
    <property type="entry name" value="MAT"/>
    <property type="match status" value="1"/>
</dbReference>
<dbReference type="SUPFAM" id="SSF55973">
    <property type="entry name" value="S-adenosylmethionine synthetase"/>
    <property type="match status" value="3"/>
</dbReference>
<dbReference type="PROSITE" id="PS00376">
    <property type="entry name" value="ADOMET_SYNTHASE_1"/>
    <property type="match status" value="1"/>
</dbReference>
<dbReference type="PROSITE" id="PS00377">
    <property type="entry name" value="ADOMET_SYNTHASE_2"/>
    <property type="match status" value="1"/>
</dbReference>
<name>METK_STRPQ</name>
<keyword id="KW-0067">ATP-binding</keyword>
<keyword id="KW-0963">Cytoplasm</keyword>
<keyword id="KW-0460">Magnesium</keyword>
<keyword id="KW-0479">Metal-binding</keyword>
<keyword id="KW-0547">Nucleotide-binding</keyword>
<keyword id="KW-0554">One-carbon metabolism</keyword>
<keyword id="KW-0630">Potassium</keyword>
<keyword id="KW-0808">Transferase</keyword>
<accession>P0DF55</accession>
<accession>Q8K715</accession>
<sequence length="398" mass="43098">MSERKLFTSESVSEGHPDKIADQISDAILDAILAEDPEAHVAAETCVYTGSVHVFGEISTTAYIDINRVVRDTIAEIGYTEAEYGFSAESVGVHPSLVEQSGDIAQGVNEALESREGDTDDLSHIGAGDQGLMFGFAINETPELMPLPISLSHQLVRRLAELRKSGEISYLRPDAKSQVTVEYDEHDKPVRVDTVVISTQHDPEATNDQIRQDVIEKVIKAVIPADYLDDDTKFFINPTGRFVIGGPQGDSGLTGRKIIVDTYGGYSRHGGGAFSGKDATKVDRSASYAARYIAKNLVAAGLATKAEVQLAYAIGVAQPVSVRVDTFGTSTVPEAVLEAAVRQVFDLRPAGIIQMLDLKRPIYKQTAAYGHMGRTDIDLPWEHLNKVDALVEAVKTVL</sequence>
<protein>
    <recommendedName>
        <fullName evidence="1">S-adenosylmethionine synthase</fullName>
        <shortName evidence="1">AdoMet synthase</shortName>
        <ecNumber evidence="1">2.5.1.6</ecNumber>
    </recommendedName>
    <alternativeName>
        <fullName evidence="1">MAT</fullName>
    </alternativeName>
    <alternativeName>
        <fullName evidence="1">Methionine adenosyltransferase</fullName>
    </alternativeName>
</protein>
<comment type="function">
    <text evidence="1">Catalyzes the formation of S-adenosylmethionine (AdoMet) from methionine and ATP. The overall synthetic reaction is composed of two sequential steps, AdoMet formation and the subsequent tripolyphosphate hydrolysis which occurs prior to release of AdoMet from the enzyme.</text>
</comment>
<comment type="catalytic activity">
    <reaction evidence="1">
        <text>L-methionine + ATP + H2O = S-adenosyl-L-methionine + phosphate + diphosphate</text>
        <dbReference type="Rhea" id="RHEA:21080"/>
        <dbReference type="ChEBI" id="CHEBI:15377"/>
        <dbReference type="ChEBI" id="CHEBI:30616"/>
        <dbReference type="ChEBI" id="CHEBI:33019"/>
        <dbReference type="ChEBI" id="CHEBI:43474"/>
        <dbReference type="ChEBI" id="CHEBI:57844"/>
        <dbReference type="ChEBI" id="CHEBI:59789"/>
        <dbReference type="EC" id="2.5.1.6"/>
    </reaction>
</comment>
<comment type="cofactor">
    <cofactor evidence="1">
        <name>Mg(2+)</name>
        <dbReference type="ChEBI" id="CHEBI:18420"/>
    </cofactor>
    <text evidence="1">Binds 2 divalent ions per subunit.</text>
</comment>
<comment type="cofactor">
    <cofactor evidence="1">
        <name>K(+)</name>
        <dbReference type="ChEBI" id="CHEBI:29103"/>
    </cofactor>
    <text evidence="1">Binds 1 potassium ion per subunit.</text>
</comment>
<comment type="pathway">
    <text evidence="1">Amino-acid biosynthesis; S-adenosyl-L-methionine biosynthesis; S-adenosyl-L-methionine from L-methionine: step 1/1.</text>
</comment>
<comment type="subunit">
    <text evidence="1">Homotetramer; dimer of dimers.</text>
</comment>
<comment type="subcellular location">
    <subcellularLocation>
        <location evidence="1">Cytoplasm</location>
    </subcellularLocation>
</comment>
<comment type="similarity">
    <text evidence="1">Belongs to the AdoMet synthase family.</text>
</comment>
<reference key="1">
    <citation type="journal article" date="2003" name="Genome Res.">
        <title>Genome sequence of an M3 strain of Streptococcus pyogenes reveals a large-scale genomic rearrangement in invasive strains and new insights into phage evolution.</title>
        <authorList>
            <person name="Nakagawa I."/>
            <person name="Kurokawa K."/>
            <person name="Yamashita A."/>
            <person name="Nakata M."/>
            <person name="Tomiyasu Y."/>
            <person name="Okahashi N."/>
            <person name="Kawabata S."/>
            <person name="Yamazaki K."/>
            <person name="Shiba T."/>
            <person name="Yasunaga T."/>
            <person name="Hayashi H."/>
            <person name="Hattori M."/>
            <person name="Hamada S."/>
        </authorList>
    </citation>
    <scope>NUCLEOTIDE SEQUENCE [LARGE SCALE GENOMIC DNA]</scope>
    <source>
        <strain>SSI-1</strain>
    </source>
</reference>
<feature type="chain" id="PRO_0000411567" description="S-adenosylmethionine synthase">
    <location>
        <begin position="1"/>
        <end position="398"/>
    </location>
</feature>
<feature type="region of interest" description="Flexible loop" evidence="1">
    <location>
        <begin position="100"/>
        <end position="110"/>
    </location>
</feature>
<feature type="binding site" description="in other chain" evidence="1">
    <location>
        <position position="16"/>
    </location>
    <ligand>
        <name>ATP</name>
        <dbReference type="ChEBI" id="CHEBI:30616"/>
        <note>ligand shared between two neighboring subunits</note>
    </ligand>
</feature>
<feature type="binding site" evidence="1">
    <location>
        <position position="18"/>
    </location>
    <ligand>
        <name>Mg(2+)</name>
        <dbReference type="ChEBI" id="CHEBI:18420"/>
    </ligand>
</feature>
<feature type="binding site" evidence="1">
    <location>
        <position position="44"/>
    </location>
    <ligand>
        <name>K(+)</name>
        <dbReference type="ChEBI" id="CHEBI:29103"/>
    </ligand>
</feature>
<feature type="binding site" description="in other chain" evidence="1">
    <location>
        <position position="57"/>
    </location>
    <ligand>
        <name>L-methionine</name>
        <dbReference type="ChEBI" id="CHEBI:57844"/>
        <note>ligand shared between two neighboring subunits</note>
    </ligand>
</feature>
<feature type="binding site" description="in other chain" evidence="1">
    <location>
        <position position="100"/>
    </location>
    <ligand>
        <name>L-methionine</name>
        <dbReference type="ChEBI" id="CHEBI:57844"/>
        <note>ligand shared between two neighboring subunits</note>
    </ligand>
</feature>
<feature type="binding site" description="in other chain" evidence="1">
    <location>
        <begin position="174"/>
        <end position="176"/>
    </location>
    <ligand>
        <name>ATP</name>
        <dbReference type="ChEBI" id="CHEBI:30616"/>
        <note>ligand shared between two neighboring subunits</note>
    </ligand>
</feature>
<feature type="binding site" description="in other chain" evidence="1">
    <location>
        <begin position="241"/>
        <end position="242"/>
    </location>
    <ligand>
        <name>ATP</name>
        <dbReference type="ChEBI" id="CHEBI:30616"/>
        <note>ligand shared between two neighboring subunits</note>
    </ligand>
</feature>
<feature type="binding site" evidence="1">
    <location>
        <position position="250"/>
    </location>
    <ligand>
        <name>ATP</name>
        <dbReference type="ChEBI" id="CHEBI:30616"/>
        <note>ligand shared between two neighboring subunits</note>
    </ligand>
</feature>
<feature type="binding site" evidence="1">
    <location>
        <position position="250"/>
    </location>
    <ligand>
        <name>L-methionine</name>
        <dbReference type="ChEBI" id="CHEBI:57844"/>
        <note>ligand shared between two neighboring subunits</note>
    </ligand>
</feature>
<feature type="binding site" description="in other chain" evidence="1">
    <location>
        <begin position="256"/>
        <end position="257"/>
    </location>
    <ligand>
        <name>ATP</name>
        <dbReference type="ChEBI" id="CHEBI:30616"/>
        <note>ligand shared between two neighboring subunits</note>
    </ligand>
</feature>
<feature type="binding site" evidence="1">
    <location>
        <position position="273"/>
    </location>
    <ligand>
        <name>ATP</name>
        <dbReference type="ChEBI" id="CHEBI:30616"/>
        <note>ligand shared between two neighboring subunits</note>
    </ligand>
</feature>
<feature type="binding site" evidence="1">
    <location>
        <position position="277"/>
    </location>
    <ligand>
        <name>ATP</name>
        <dbReference type="ChEBI" id="CHEBI:30616"/>
        <note>ligand shared between two neighboring subunits</note>
    </ligand>
</feature>
<feature type="binding site" description="in other chain" evidence="1">
    <location>
        <position position="281"/>
    </location>
    <ligand>
        <name>L-methionine</name>
        <dbReference type="ChEBI" id="CHEBI:57844"/>
        <note>ligand shared between two neighboring subunits</note>
    </ligand>
</feature>
<proteinExistence type="inferred from homology"/>
<gene>
    <name evidence="1" type="primary">metK</name>
    <name type="ordered locus">SPs0826</name>
</gene>